<keyword id="KW-0056">Arginine metabolism</keyword>
<keyword id="KW-0520">NAD</keyword>
<keyword id="KW-0560">Oxidoreductase</keyword>
<comment type="function">
    <text evidence="1">Catalyzes the NAD-dependent reduction of succinylglutamate semialdehyde into succinylglutamate.</text>
</comment>
<comment type="catalytic activity">
    <reaction evidence="1">
        <text>N-succinyl-L-glutamate 5-semialdehyde + NAD(+) + H2O = N-succinyl-L-glutamate + NADH + 2 H(+)</text>
        <dbReference type="Rhea" id="RHEA:10812"/>
        <dbReference type="ChEBI" id="CHEBI:15377"/>
        <dbReference type="ChEBI" id="CHEBI:15378"/>
        <dbReference type="ChEBI" id="CHEBI:57540"/>
        <dbReference type="ChEBI" id="CHEBI:57945"/>
        <dbReference type="ChEBI" id="CHEBI:58520"/>
        <dbReference type="ChEBI" id="CHEBI:58763"/>
        <dbReference type="EC" id="1.2.1.71"/>
    </reaction>
</comment>
<comment type="pathway">
    <text evidence="1">Amino-acid degradation; L-arginine degradation via AST pathway; L-glutamate and succinate from L-arginine: step 4/5.</text>
</comment>
<comment type="similarity">
    <text evidence="1">Belongs to the aldehyde dehydrogenase family. AstD subfamily.</text>
</comment>
<accession>A5F529</accession>
<accession>C3LXL4</accession>
<organism>
    <name type="scientific">Vibrio cholerae serotype O1 (strain ATCC 39541 / Classical Ogawa 395 / O395)</name>
    <dbReference type="NCBI Taxonomy" id="345073"/>
    <lineage>
        <taxon>Bacteria</taxon>
        <taxon>Pseudomonadati</taxon>
        <taxon>Pseudomonadota</taxon>
        <taxon>Gammaproteobacteria</taxon>
        <taxon>Vibrionales</taxon>
        <taxon>Vibrionaceae</taxon>
        <taxon>Vibrio</taxon>
    </lineage>
</organism>
<dbReference type="EC" id="1.2.1.71" evidence="1"/>
<dbReference type="EMBL" id="CP000627">
    <property type="protein sequence ID" value="ABQ21560.1"/>
    <property type="molecule type" value="Genomic_DNA"/>
</dbReference>
<dbReference type="EMBL" id="CP001235">
    <property type="protein sequence ID" value="ACP10714.1"/>
    <property type="molecule type" value="Genomic_DNA"/>
</dbReference>
<dbReference type="RefSeq" id="WP_000150128.1">
    <property type="nucleotide sequence ID" value="NZ_JAACZH010000007.1"/>
</dbReference>
<dbReference type="SMR" id="A5F529"/>
<dbReference type="KEGG" id="vco:VC0395_A2193"/>
<dbReference type="KEGG" id="vcr:VC395_2729"/>
<dbReference type="PATRIC" id="fig|345073.21.peg.2629"/>
<dbReference type="eggNOG" id="COG1012">
    <property type="taxonomic scope" value="Bacteria"/>
</dbReference>
<dbReference type="HOGENOM" id="CLU_005391_1_0_6"/>
<dbReference type="OrthoDB" id="9812625at2"/>
<dbReference type="UniPathway" id="UPA00185">
    <property type="reaction ID" value="UER00282"/>
</dbReference>
<dbReference type="Proteomes" id="UP000000249">
    <property type="component" value="Chromosome 2"/>
</dbReference>
<dbReference type="GO" id="GO:0043824">
    <property type="term" value="F:succinylglutamate-semialdehyde dehydrogenase activity"/>
    <property type="evidence" value="ECO:0007669"/>
    <property type="project" value="UniProtKB-EC"/>
</dbReference>
<dbReference type="GO" id="GO:0019544">
    <property type="term" value="P:arginine catabolic process to glutamate"/>
    <property type="evidence" value="ECO:0007669"/>
    <property type="project" value="UniProtKB-UniRule"/>
</dbReference>
<dbReference type="GO" id="GO:0019545">
    <property type="term" value="P:arginine catabolic process to succinate"/>
    <property type="evidence" value="ECO:0007669"/>
    <property type="project" value="UniProtKB-UniRule"/>
</dbReference>
<dbReference type="CDD" id="cd07095">
    <property type="entry name" value="ALDH_SGSD_AstD"/>
    <property type="match status" value="1"/>
</dbReference>
<dbReference type="FunFam" id="3.40.605.10:FF:000010">
    <property type="entry name" value="N-succinylglutamate 5-semialdehyde dehydrogenase"/>
    <property type="match status" value="1"/>
</dbReference>
<dbReference type="Gene3D" id="3.40.605.10">
    <property type="entry name" value="Aldehyde Dehydrogenase, Chain A, domain 1"/>
    <property type="match status" value="1"/>
</dbReference>
<dbReference type="Gene3D" id="3.40.309.10">
    <property type="entry name" value="Aldehyde Dehydrogenase, Chain A, domain 2"/>
    <property type="match status" value="1"/>
</dbReference>
<dbReference type="HAMAP" id="MF_01174">
    <property type="entry name" value="Aldedh_AstD"/>
    <property type="match status" value="1"/>
</dbReference>
<dbReference type="InterPro" id="IPR016161">
    <property type="entry name" value="Ald_DH/histidinol_DH"/>
</dbReference>
<dbReference type="InterPro" id="IPR016163">
    <property type="entry name" value="Ald_DH_C"/>
</dbReference>
<dbReference type="InterPro" id="IPR016160">
    <property type="entry name" value="Ald_DH_CS_CYS"/>
</dbReference>
<dbReference type="InterPro" id="IPR029510">
    <property type="entry name" value="Ald_DH_CS_GLU"/>
</dbReference>
<dbReference type="InterPro" id="IPR016162">
    <property type="entry name" value="Ald_DH_N"/>
</dbReference>
<dbReference type="InterPro" id="IPR015590">
    <property type="entry name" value="Aldehyde_DH_dom"/>
</dbReference>
<dbReference type="InterPro" id="IPR017649">
    <property type="entry name" value="SuccinylGlu_semiald_DH_AstD"/>
</dbReference>
<dbReference type="NCBIfam" id="TIGR03240">
    <property type="entry name" value="arg_catab_astD"/>
    <property type="match status" value="1"/>
</dbReference>
<dbReference type="NCBIfam" id="NF006992">
    <property type="entry name" value="PRK09457.1"/>
    <property type="match status" value="1"/>
</dbReference>
<dbReference type="PANTHER" id="PTHR11699">
    <property type="entry name" value="ALDEHYDE DEHYDROGENASE-RELATED"/>
    <property type="match status" value="1"/>
</dbReference>
<dbReference type="Pfam" id="PF00171">
    <property type="entry name" value="Aldedh"/>
    <property type="match status" value="1"/>
</dbReference>
<dbReference type="SUPFAM" id="SSF53720">
    <property type="entry name" value="ALDH-like"/>
    <property type="match status" value="1"/>
</dbReference>
<dbReference type="PROSITE" id="PS00070">
    <property type="entry name" value="ALDEHYDE_DEHYDR_CYS"/>
    <property type="match status" value="1"/>
</dbReference>
<dbReference type="PROSITE" id="PS00687">
    <property type="entry name" value="ALDEHYDE_DEHYDR_GLU"/>
    <property type="match status" value="1"/>
</dbReference>
<evidence type="ECO:0000255" key="1">
    <source>
        <dbReference type="HAMAP-Rule" id="MF_01174"/>
    </source>
</evidence>
<protein>
    <recommendedName>
        <fullName evidence="1">N-succinylglutamate 5-semialdehyde dehydrogenase</fullName>
        <ecNumber evidence="1">1.2.1.71</ecNumber>
    </recommendedName>
    <alternativeName>
        <fullName evidence="1">Succinylglutamic semialdehyde dehydrogenase</fullName>
        <shortName evidence="1">SGSD</shortName>
    </alternativeName>
</protein>
<sequence>MTHWIAGEWVAGTGEKLESHTPYSHELLWQGYSASGEQVDAAVKAARRAFLDWKKRPFAEREQKVLAFAELVKANSEQIAQVIAKETGKPLWETRTEAASIAGKIAISIRAYHERTGETVREAAGNQLVLRHRPLGVMAVFGPYNFPGHLPNGHIVPALLAGNTVVFKPSEQTPWTGEVLMQLWQQAGLPAGVINLVQGSKETGIALAQSRGIDGLLFTGSANTGHLLHRQFAGQPDKMLALEMGGNNPMVISEHYGDLDATVYTIIQSAFISSGQRCTCVRRLYVPQGTKGDALLDKLVSVTAKLRIDQPFAEPAPFMGPLVSEAAAQAILKAQADLQALGGKSLLEARALHAAFITPAIIDVTAIERLPDDEYFGPLLQVVRYQTLAQAVELANDTRFGLSAGLVSTDDGEWDYFVEHIRAGIVNRNRQLTGASGDAPFGGPGASGNLRPSAFYAADYCAYPMASMEGDTTLLPATLSPGVEL</sequence>
<gene>
    <name evidence="1" type="primary">astD</name>
    <name type="synonym">aruD</name>
    <name type="ordered locus">VC0395_A2193</name>
    <name type="ordered locus">VC395_2729</name>
</gene>
<reference key="1">
    <citation type="submission" date="2007-03" db="EMBL/GenBank/DDBJ databases">
        <authorList>
            <person name="Heidelberg J."/>
        </authorList>
    </citation>
    <scope>NUCLEOTIDE SEQUENCE [LARGE SCALE GENOMIC DNA]</scope>
    <source>
        <strain>ATCC 39541 / Classical Ogawa 395 / O395</strain>
    </source>
</reference>
<reference key="2">
    <citation type="journal article" date="2008" name="PLoS ONE">
        <title>A recalibrated molecular clock and independent origins for the cholera pandemic clones.</title>
        <authorList>
            <person name="Feng L."/>
            <person name="Reeves P.R."/>
            <person name="Lan R."/>
            <person name="Ren Y."/>
            <person name="Gao C."/>
            <person name="Zhou Z."/>
            <person name="Ren Y."/>
            <person name="Cheng J."/>
            <person name="Wang W."/>
            <person name="Wang J."/>
            <person name="Qian W."/>
            <person name="Li D."/>
            <person name="Wang L."/>
        </authorList>
    </citation>
    <scope>NUCLEOTIDE SEQUENCE [LARGE SCALE GENOMIC DNA]</scope>
    <source>
        <strain>ATCC 39541 / Classical Ogawa 395 / O395</strain>
    </source>
</reference>
<name>ASTD_VIBC3</name>
<proteinExistence type="inferred from homology"/>
<feature type="chain" id="PRO_1000073079" description="N-succinylglutamate 5-semialdehyde dehydrogenase">
    <location>
        <begin position="1"/>
        <end position="485"/>
    </location>
</feature>
<feature type="active site" evidence="1">
    <location>
        <position position="243"/>
    </location>
</feature>
<feature type="active site" evidence="1">
    <location>
        <position position="278"/>
    </location>
</feature>
<feature type="binding site" evidence="1">
    <location>
        <begin position="220"/>
        <end position="225"/>
    </location>
    <ligand>
        <name>NAD(+)</name>
        <dbReference type="ChEBI" id="CHEBI:57540"/>
    </ligand>
</feature>